<accession>C5B832</accession>
<proteinExistence type="inferred from homology"/>
<organism>
    <name type="scientific">Edwardsiella ictaluri (strain 93-146)</name>
    <dbReference type="NCBI Taxonomy" id="634503"/>
    <lineage>
        <taxon>Bacteria</taxon>
        <taxon>Pseudomonadati</taxon>
        <taxon>Pseudomonadota</taxon>
        <taxon>Gammaproteobacteria</taxon>
        <taxon>Enterobacterales</taxon>
        <taxon>Hafniaceae</taxon>
        <taxon>Edwardsiella</taxon>
    </lineage>
</organism>
<name>SYR_EDWI9</name>
<keyword id="KW-0030">Aminoacyl-tRNA synthetase</keyword>
<keyword id="KW-0067">ATP-binding</keyword>
<keyword id="KW-0963">Cytoplasm</keyword>
<keyword id="KW-0436">Ligase</keyword>
<keyword id="KW-0547">Nucleotide-binding</keyword>
<keyword id="KW-0648">Protein biosynthesis</keyword>
<evidence type="ECO:0000255" key="1">
    <source>
        <dbReference type="HAMAP-Rule" id="MF_00123"/>
    </source>
</evidence>
<reference key="1">
    <citation type="submission" date="2009-03" db="EMBL/GenBank/DDBJ databases">
        <title>Complete genome sequence of Edwardsiella ictaluri 93-146.</title>
        <authorList>
            <person name="Williams M.L."/>
            <person name="Gillaspy A.F."/>
            <person name="Dyer D.W."/>
            <person name="Thune R.L."/>
            <person name="Waldbieser G.C."/>
            <person name="Schuster S.C."/>
            <person name="Gipson J."/>
            <person name="Zaitshik J."/>
            <person name="Landry C."/>
            <person name="Lawrence M.L."/>
        </authorList>
    </citation>
    <scope>NUCLEOTIDE SEQUENCE [LARGE SCALE GENOMIC DNA]</scope>
    <source>
        <strain>93-146</strain>
    </source>
</reference>
<gene>
    <name evidence="1" type="primary">argS</name>
    <name type="ordered locus">NT01EI_1584</name>
</gene>
<dbReference type="EC" id="6.1.1.19" evidence="1"/>
<dbReference type="EMBL" id="CP001600">
    <property type="protein sequence ID" value="ACR68768.1"/>
    <property type="molecule type" value="Genomic_DNA"/>
</dbReference>
<dbReference type="RefSeq" id="WP_015870926.1">
    <property type="nucleotide sequence ID" value="NZ_CP169062.1"/>
</dbReference>
<dbReference type="SMR" id="C5B832"/>
<dbReference type="STRING" id="67780.B6E78_01110"/>
<dbReference type="GeneID" id="69538561"/>
<dbReference type="KEGG" id="eic:NT01EI_1584"/>
<dbReference type="PATRIC" id="fig|634503.3.peg.1416"/>
<dbReference type="HOGENOM" id="CLU_006406_5_1_6"/>
<dbReference type="OrthoDB" id="9803211at2"/>
<dbReference type="Proteomes" id="UP000001485">
    <property type="component" value="Chromosome"/>
</dbReference>
<dbReference type="GO" id="GO:0005737">
    <property type="term" value="C:cytoplasm"/>
    <property type="evidence" value="ECO:0007669"/>
    <property type="project" value="UniProtKB-SubCell"/>
</dbReference>
<dbReference type="GO" id="GO:0004814">
    <property type="term" value="F:arginine-tRNA ligase activity"/>
    <property type="evidence" value="ECO:0007669"/>
    <property type="project" value="UniProtKB-UniRule"/>
</dbReference>
<dbReference type="GO" id="GO:0005524">
    <property type="term" value="F:ATP binding"/>
    <property type="evidence" value="ECO:0007669"/>
    <property type="project" value="UniProtKB-UniRule"/>
</dbReference>
<dbReference type="GO" id="GO:0006420">
    <property type="term" value="P:arginyl-tRNA aminoacylation"/>
    <property type="evidence" value="ECO:0007669"/>
    <property type="project" value="UniProtKB-UniRule"/>
</dbReference>
<dbReference type="CDD" id="cd07956">
    <property type="entry name" value="Anticodon_Ia_Arg"/>
    <property type="match status" value="1"/>
</dbReference>
<dbReference type="CDD" id="cd00671">
    <property type="entry name" value="ArgRS_core"/>
    <property type="match status" value="1"/>
</dbReference>
<dbReference type="FunFam" id="1.10.730.10:FF:000001">
    <property type="entry name" value="Arginine--tRNA ligase"/>
    <property type="match status" value="1"/>
</dbReference>
<dbReference type="FunFam" id="3.40.50.620:FF:000030">
    <property type="entry name" value="Arginine--tRNA ligase"/>
    <property type="match status" value="1"/>
</dbReference>
<dbReference type="Gene3D" id="3.30.1360.70">
    <property type="entry name" value="Arginyl tRNA synthetase N-terminal domain"/>
    <property type="match status" value="1"/>
</dbReference>
<dbReference type="Gene3D" id="3.40.50.620">
    <property type="entry name" value="HUPs"/>
    <property type="match status" value="1"/>
</dbReference>
<dbReference type="Gene3D" id="1.10.730.10">
    <property type="entry name" value="Isoleucyl-tRNA Synthetase, Domain 1"/>
    <property type="match status" value="1"/>
</dbReference>
<dbReference type="HAMAP" id="MF_00123">
    <property type="entry name" value="Arg_tRNA_synth"/>
    <property type="match status" value="1"/>
</dbReference>
<dbReference type="InterPro" id="IPR001412">
    <property type="entry name" value="aa-tRNA-synth_I_CS"/>
</dbReference>
<dbReference type="InterPro" id="IPR001278">
    <property type="entry name" value="Arg-tRNA-ligase"/>
</dbReference>
<dbReference type="InterPro" id="IPR005148">
    <property type="entry name" value="Arg-tRNA-synth_N"/>
</dbReference>
<dbReference type="InterPro" id="IPR036695">
    <property type="entry name" value="Arg-tRNA-synth_N_sf"/>
</dbReference>
<dbReference type="InterPro" id="IPR035684">
    <property type="entry name" value="ArgRS_core"/>
</dbReference>
<dbReference type="InterPro" id="IPR008909">
    <property type="entry name" value="DALR_anticod-bd"/>
</dbReference>
<dbReference type="InterPro" id="IPR014729">
    <property type="entry name" value="Rossmann-like_a/b/a_fold"/>
</dbReference>
<dbReference type="InterPro" id="IPR009080">
    <property type="entry name" value="tRNAsynth_Ia_anticodon-bd"/>
</dbReference>
<dbReference type="NCBIfam" id="TIGR00456">
    <property type="entry name" value="argS"/>
    <property type="match status" value="1"/>
</dbReference>
<dbReference type="PANTHER" id="PTHR11956:SF5">
    <property type="entry name" value="ARGININE--TRNA LIGASE, CYTOPLASMIC"/>
    <property type="match status" value="1"/>
</dbReference>
<dbReference type="PANTHER" id="PTHR11956">
    <property type="entry name" value="ARGINYL-TRNA SYNTHETASE"/>
    <property type="match status" value="1"/>
</dbReference>
<dbReference type="Pfam" id="PF03485">
    <property type="entry name" value="Arg_tRNA_synt_N"/>
    <property type="match status" value="1"/>
</dbReference>
<dbReference type="Pfam" id="PF05746">
    <property type="entry name" value="DALR_1"/>
    <property type="match status" value="1"/>
</dbReference>
<dbReference type="Pfam" id="PF00750">
    <property type="entry name" value="tRNA-synt_1d"/>
    <property type="match status" value="1"/>
</dbReference>
<dbReference type="PRINTS" id="PR01038">
    <property type="entry name" value="TRNASYNTHARG"/>
</dbReference>
<dbReference type="SMART" id="SM01016">
    <property type="entry name" value="Arg_tRNA_synt_N"/>
    <property type="match status" value="1"/>
</dbReference>
<dbReference type="SMART" id="SM00836">
    <property type="entry name" value="DALR_1"/>
    <property type="match status" value="1"/>
</dbReference>
<dbReference type="SUPFAM" id="SSF47323">
    <property type="entry name" value="Anticodon-binding domain of a subclass of class I aminoacyl-tRNA synthetases"/>
    <property type="match status" value="1"/>
</dbReference>
<dbReference type="SUPFAM" id="SSF55190">
    <property type="entry name" value="Arginyl-tRNA synthetase (ArgRS), N-terminal 'additional' domain"/>
    <property type="match status" value="1"/>
</dbReference>
<dbReference type="SUPFAM" id="SSF52374">
    <property type="entry name" value="Nucleotidylyl transferase"/>
    <property type="match status" value="1"/>
</dbReference>
<dbReference type="PROSITE" id="PS00178">
    <property type="entry name" value="AA_TRNA_LIGASE_I"/>
    <property type="match status" value="1"/>
</dbReference>
<comment type="catalytic activity">
    <reaction evidence="1">
        <text>tRNA(Arg) + L-arginine + ATP = L-arginyl-tRNA(Arg) + AMP + diphosphate</text>
        <dbReference type="Rhea" id="RHEA:20301"/>
        <dbReference type="Rhea" id="RHEA-COMP:9658"/>
        <dbReference type="Rhea" id="RHEA-COMP:9673"/>
        <dbReference type="ChEBI" id="CHEBI:30616"/>
        <dbReference type="ChEBI" id="CHEBI:32682"/>
        <dbReference type="ChEBI" id="CHEBI:33019"/>
        <dbReference type="ChEBI" id="CHEBI:78442"/>
        <dbReference type="ChEBI" id="CHEBI:78513"/>
        <dbReference type="ChEBI" id="CHEBI:456215"/>
        <dbReference type="EC" id="6.1.1.19"/>
    </reaction>
</comment>
<comment type="subunit">
    <text evidence="1">Monomer.</text>
</comment>
<comment type="subcellular location">
    <subcellularLocation>
        <location evidence="1">Cytoplasm</location>
    </subcellularLocation>
</comment>
<comment type="similarity">
    <text evidence="1">Belongs to the class-I aminoacyl-tRNA synthetase family.</text>
</comment>
<sequence>MNIQEIISDKVTQALVAAGAPAGSEALVRPSAKVQFGDYQANGIMSAAKKMGLPPRQLAEQVVANLALDGIASKVEIAGPGFINIFLDAAWLAAQADAALADPRLGVARVEPQTIVVDYSAPNVAKEMHVGHLRSTIIGDAAVRTLEFLGHNVIRANHVGDWGTQFGMLIAYLEKVQGSSETGDMALADLEAFYREAKKHYDEDAAFAERARGYVVKLQGGDEYCREMWRKLVDITMRQNQRNYDRLNVTLTDDDVMGESLYNPMLPGIVADLKAKGLATESEGATVVFLNEFRNKEGEPMGVIVQKKDGGYLYTTTDIACAKYRYETLGANRILYYIDSRQHQHLMQAWTIVRKAGYVPDSVSLEHHMFGMMLGKDGKPFKTRAGGTIKLADLLDEAIERAAKLIAAKNPELSGDELKALVEVVGIGAVKYADLSKNRTTDYIFDWDNMLAFEGNTAPYMQYAYTRVASIFKRAGIDENTLQGAITLTEEREKALATRLMQFEETILSVAREGTPHVMCAYLYEVAGLFSSFYEACPILNAEEESVRASRLKLAALTARTLKTGLDTLGIKTVERM</sequence>
<protein>
    <recommendedName>
        <fullName evidence="1">Arginine--tRNA ligase</fullName>
        <ecNumber evidence="1">6.1.1.19</ecNumber>
    </recommendedName>
    <alternativeName>
        <fullName evidence="1">Arginyl-tRNA synthetase</fullName>
        <shortName evidence="1">ArgRS</shortName>
    </alternativeName>
</protein>
<feature type="chain" id="PRO_1000203093" description="Arginine--tRNA ligase">
    <location>
        <begin position="1"/>
        <end position="577"/>
    </location>
</feature>
<feature type="short sequence motif" description="'HIGH' region">
    <location>
        <begin position="122"/>
        <end position="132"/>
    </location>
</feature>